<gene>
    <name type="ordered locus">CLD_1129</name>
</gene>
<dbReference type="EC" id="3.1.3.-" evidence="1"/>
<dbReference type="EMBL" id="CP000939">
    <property type="protein sequence ID" value="ACA44485.1"/>
    <property type="molecule type" value="Genomic_DNA"/>
</dbReference>
<dbReference type="RefSeq" id="WP_003357300.1">
    <property type="nucleotide sequence ID" value="NC_010516.1"/>
</dbReference>
<dbReference type="SMR" id="B1IFW5"/>
<dbReference type="KEGG" id="cbb:CLD_1129"/>
<dbReference type="HOGENOM" id="CLU_061999_0_1_9"/>
<dbReference type="Proteomes" id="UP000008541">
    <property type="component" value="Chromosome"/>
</dbReference>
<dbReference type="GO" id="GO:0005829">
    <property type="term" value="C:cytosol"/>
    <property type="evidence" value="ECO:0007669"/>
    <property type="project" value="TreeGrafter"/>
</dbReference>
<dbReference type="GO" id="GO:0016791">
    <property type="term" value="F:phosphatase activity"/>
    <property type="evidence" value="ECO:0007669"/>
    <property type="project" value="UniProtKB-UniRule"/>
</dbReference>
<dbReference type="GO" id="GO:0008270">
    <property type="term" value="F:zinc ion binding"/>
    <property type="evidence" value="ECO:0007669"/>
    <property type="project" value="UniProtKB-UniRule"/>
</dbReference>
<dbReference type="CDD" id="cd07437">
    <property type="entry name" value="PHP_HisPPase_Ycdx_like"/>
    <property type="match status" value="1"/>
</dbReference>
<dbReference type="FunFam" id="3.20.20.140:FF:000117">
    <property type="entry name" value="Probable phosphatase C1142_00695"/>
    <property type="match status" value="1"/>
</dbReference>
<dbReference type="Gene3D" id="3.20.20.140">
    <property type="entry name" value="Metal-dependent hydrolases"/>
    <property type="match status" value="1"/>
</dbReference>
<dbReference type="HAMAP" id="MF_01561">
    <property type="entry name" value="YcdX_phosphat"/>
    <property type="match status" value="1"/>
</dbReference>
<dbReference type="InterPro" id="IPR023710">
    <property type="entry name" value="Phosphatase_YcdX_put"/>
</dbReference>
<dbReference type="InterPro" id="IPR004013">
    <property type="entry name" value="PHP_dom"/>
</dbReference>
<dbReference type="InterPro" id="IPR050243">
    <property type="entry name" value="PHP_phosphatase"/>
</dbReference>
<dbReference type="InterPro" id="IPR003141">
    <property type="entry name" value="Pol/His_phosphatase_N"/>
</dbReference>
<dbReference type="InterPro" id="IPR016195">
    <property type="entry name" value="Pol/histidinol_Pase-like"/>
</dbReference>
<dbReference type="NCBIfam" id="NF006702">
    <property type="entry name" value="PRK09248.1"/>
    <property type="match status" value="1"/>
</dbReference>
<dbReference type="PANTHER" id="PTHR36928">
    <property type="entry name" value="PHOSPHATASE YCDX-RELATED"/>
    <property type="match status" value="1"/>
</dbReference>
<dbReference type="PANTHER" id="PTHR36928:SF1">
    <property type="entry name" value="PHOSPHATASE YCDX-RELATED"/>
    <property type="match status" value="1"/>
</dbReference>
<dbReference type="Pfam" id="PF02811">
    <property type="entry name" value="PHP"/>
    <property type="match status" value="1"/>
</dbReference>
<dbReference type="SMART" id="SM00481">
    <property type="entry name" value="POLIIIAc"/>
    <property type="match status" value="1"/>
</dbReference>
<dbReference type="SUPFAM" id="SSF89550">
    <property type="entry name" value="PHP domain-like"/>
    <property type="match status" value="1"/>
</dbReference>
<keyword id="KW-0378">Hydrolase</keyword>
<keyword id="KW-0479">Metal-binding</keyword>
<keyword id="KW-0862">Zinc</keyword>
<evidence type="ECO:0000255" key="1">
    <source>
        <dbReference type="HAMAP-Rule" id="MF_01561"/>
    </source>
</evidence>
<sequence>MRYLVDTHTHTIVSGHAYTTFLENVQEASNIGLKVLGTTDHGPSMPGGPNLFYFNNFKVMPRKLKGVTLLHGCEANIIDFKGMLDIPDFTQKKLDVIIASLHDVCIRPGSVEENTEALINVMENPYVDILGHIGNPSFPINEEVVVKKAKEKNVLIEINNGSFVSRKGSEETCKKVANLCKKHKVNIIVGSDSHVCFQIGRFPKADNMLKEIGMPEELIINNEENKILEYLKNKGKLKDLNLD</sequence>
<protein>
    <recommendedName>
        <fullName evidence="1">Probable phosphatase CLD_1129</fullName>
        <ecNumber evidence="1">3.1.3.-</ecNumber>
    </recommendedName>
</protein>
<organism>
    <name type="scientific">Clostridium botulinum (strain Okra / Type B1)</name>
    <dbReference type="NCBI Taxonomy" id="498213"/>
    <lineage>
        <taxon>Bacteria</taxon>
        <taxon>Bacillati</taxon>
        <taxon>Bacillota</taxon>
        <taxon>Clostridia</taxon>
        <taxon>Eubacteriales</taxon>
        <taxon>Clostridiaceae</taxon>
        <taxon>Clostridium</taxon>
    </lineage>
</organism>
<feature type="chain" id="PRO_1000147128" description="Probable phosphatase CLD_1129">
    <location>
        <begin position="1"/>
        <end position="243"/>
    </location>
</feature>
<feature type="binding site" evidence="1">
    <location>
        <position position="8"/>
    </location>
    <ligand>
        <name>Zn(2+)</name>
        <dbReference type="ChEBI" id="CHEBI:29105"/>
        <label>1</label>
    </ligand>
</feature>
<feature type="binding site" evidence="1">
    <location>
        <position position="10"/>
    </location>
    <ligand>
        <name>Zn(2+)</name>
        <dbReference type="ChEBI" id="CHEBI:29105"/>
        <label>1</label>
    </ligand>
</feature>
<feature type="binding site" evidence="1">
    <location>
        <position position="16"/>
    </location>
    <ligand>
        <name>Zn(2+)</name>
        <dbReference type="ChEBI" id="CHEBI:29105"/>
        <label>2</label>
    </ligand>
</feature>
<feature type="binding site" evidence="1">
    <location>
        <position position="41"/>
    </location>
    <ligand>
        <name>Zn(2+)</name>
        <dbReference type="ChEBI" id="CHEBI:29105"/>
        <label>2</label>
    </ligand>
</feature>
<feature type="binding site" evidence="1">
    <location>
        <position position="74"/>
    </location>
    <ligand>
        <name>Zn(2+)</name>
        <dbReference type="ChEBI" id="CHEBI:29105"/>
        <label>1</label>
    </ligand>
</feature>
<feature type="binding site" evidence="1">
    <location>
        <position position="74"/>
    </location>
    <ligand>
        <name>Zn(2+)</name>
        <dbReference type="ChEBI" id="CHEBI:29105"/>
        <label>3</label>
    </ligand>
</feature>
<feature type="binding site" evidence="1">
    <location>
        <position position="102"/>
    </location>
    <ligand>
        <name>Zn(2+)</name>
        <dbReference type="ChEBI" id="CHEBI:29105"/>
        <label>3</label>
    </ligand>
</feature>
<feature type="binding site" evidence="1">
    <location>
        <position position="132"/>
    </location>
    <ligand>
        <name>Zn(2+)</name>
        <dbReference type="ChEBI" id="CHEBI:29105"/>
        <label>3</label>
    </ligand>
</feature>
<feature type="binding site" evidence="1">
    <location>
        <position position="192"/>
    </location>
    <ligand>
        <name>Zn(2+)</name>
        <dbReference type="ChEBI" id="CHEBI:29105"/>
        <label>1</label>
    </ligand>
</feature>
<feature type="binding site" evidence="1">
    <location>
        <position position="194"/>
    </location>
    <ligand>
        <name>Zn(2+)</name>
        <dbReference type="ChEBI" id="CHEBI:29105"/>
        <label>2</label>
    </ligand>
</feature>
<comment type="cofactor">
    <cofactor evidence="1">
        <name>Zn(2+)</name>
        <dbReference type="ChEBI" id="CHEBI:29105"/>
    </cofactor>
    <text evidence="1">Binds 3 Zn(2+) ions per subunit.</text>
</comment>
<comment type="similarity">
    <text evidence="1">Belongs to the PHP family.</text>
</comment>
<reference key="1">
    <citation type="journal article" date="2007" name="PLoS ONE">
        <title>Analysis of the neurotoxin complex genes in Clostridium botulinum A1-A4 and B1 strains: BoNT/A3, /Ba4 and /B1 clusters are located within plasmids.</title>
        <authorList>
            <person name="Smith T.J."/>
            <person name="Hill K.K."/>
            <person name="Foley B.T."/>
            <person name="Detter J.C."/>
            <person name="Munk A.C."/>
            <person name="Bruce D.C."/>
            <person name="Doggett N.A."/>
            <person name="Smith L.A."/>
            <person name="Marks J.D."/>
            <person name="Xie G."/>
            <person name="Brettin T.S."/>
        </authorList>
    </citation>
    <scope>NUCLEOTIDE SEQUENCE [LARGE SCALE GENOMIC DNA]</scope>
    <source>
        <strain>Okra / Type B1</strain>
    </source>
</reference>
<name>Y1129_CLOBK</name>
<accession>B1IFW5</accession>
<proteinExistence type="inferred from homology"/>